<organism>
    <name type="scientific">Burkholderia thailandensis (strain ATCC 700388 / DSM 13276 / CCUG 48851 / CIP 106301 / E264)</name>
    <dbReference type="NCBI Taxonomy" id="271848"/>
    <lineage>
        <taxon>Bacteria</taxon>
        <taxon>Pseudomonadati</taxon>
        <taxon>Pseudomonadota</taxon>
        <taxon>Betaproteobacteria</taxon>
        <taxon>Burkholderiales</taxon>
        <taxon>Burkholderiaceae</taxon>
        <taxon>Burkholderia</taxon>
        <taxon>pseudomallei group</taxon>
    </lineage>
</organism>
<accession>Q2SVM8</accession>
<protein>
    <recommendedName>
        <fullName evidence="1">Alkanesulfonate monooxygenase</fullName>
        <ecNumber evidence="1">1.14.14.5</ecNumber>
    </recommendedName>
    <alternativeName>
        <fullName evidence="1">FMNH2-dependent aliphatic sulfonate monooxygenase</fullName>
    </alternativeName>
</protein>
<feature type="chain" id="PRO_0000403214" description="Alkanesulfonate monooxygenase">
    <location>
        <begin position="1"/>
        <end position="384"/>
    </location>
</feature>
<gene>
    <name evidence="1" type="primary">ssuD</name>
    <name type="ordered locus">BTH_I2501</name>
</gene>
<dbReference type="EC" id="1.14.14.5" evidence="1"/>
<dbReference type="EMBL" id="CP000086">
    <property type="protein sequence ID" value="ABC38862.1"/>
    <property type="status" value="ALT_INIT"/>
    <property type="molecule type" value="Genomic_DNA"/>
</dbReference>
<dbReference type="RefSeq" id="WP_009891371.1">
    <property type="nucleotide sequence ID" value="NC_007651.1"/>
</dbReference>
<dbReference type="SMR" id="Q2SVM8"/>
<dbReference type="GeneID" id="45122212"/>
<dbReference type="KEGG" id="bte:BTH_I2501"/>
<dbReference type="HOGENOM" id="CLU_027853_1_0_4"/>
<dbReference type="Proteomes" id="UP000001930">
    <property type="component" value="Chromosome I"/>
</dbReference>
<dbReference type="GO" id="GO:0008726">
    <property type="term" value="F:alkanesulfonate monooxygenase activity"/>
    <property type="evidence" value="ECO:0007669"/>
    <property type="project" value="UniProtKB-UniRule"/>
</dbReference>
<dbReference type="GO" id="GO:0046306">
    <property type="term" value="P:alkanesulfonate catabolic process"/>
    <property type="evidence" value="ECO:0007669"/>
    <property type="project" value="TreeGrafter"/>
</dbReference>
<dbReference type="CDD" id="cd01094">
    <property type="entry name" value="Alkanesulfonate_monoxygenase"/>
    <property type="match status" value="1"/>
</dbReference>
<dbReference type="Gene3D" id="3.20.20.30">
    <property type="entry name" value="Luciferase-like domain"/>
    <property type="match status" value="1"/>
</dbReference>
<dbReference type="HAMAP" id="MF_01229">
    <property type="entry name" value="Alkanesulf_monooxygen"/>
    <property type="match status" value="1"/>
</dbReference>
<dbReference type="InterPro" id="IPR019911">
    <property type="entry name" value="Alkanesulphonate_mOase_FMN-dep"/>
</dbReference>
<dbReference type="InterPro" id="IPR011251">
    <property type="entry name" value="Luciferase-like_dom"/>
</dbReference>
<dbReference type="InterPro" id="IPR036661">
    <property type="entry name" value="Luciferase-like_sf"/>
</dbReference>
<dbReference type="InterPro" id="IPR050172">
    <property type="entry name" value="SsuD_RutA_monooxygenase"/>
</dbReference>
<dbReference type="NCBIfam" id="TIGR03565">
    <property type="entry name" value="alk_sulf_monoox"/>
    <property type="match status" value="1"/>
</dbReference>
<dbReference type="NCBIfam" id="NF001939">
    <property type="entry name" value="PRK00719.1"/>
    <property type="match status" value="1"/>
</dbReference>
<dbReference type="PANTHER" id="PTHR42847">
    <property type="entry name" value="ALKANESULFONATE MONOOXYGENASE"/>
    <property type="match status" value="1"/>
</dbReference>
<dbReference type="PANTHER" id="PTHR42847:SF4">
    <property type="entry name" value="ALKANESULFONATE MONOOXYGENASE-RELATED"/>
    <property type="match status" value="1"/>
</dbReference>
<dbReference type="Pfam" id="PF00296">
    <property type="entry name" value="Bac_luciferase"/>
    <property type="match status" value="1"/>
</dbReference>
<dbReference type="SUPFAM" id="SSF51679">
    <property type="entry name" value="Bacterial luciferase-like"/>
    <property type="match status" value="1"/>
</dbReference>
<reference key="1">
    <citation type="journal article" date="2005" name="BMC Genomics">
        <title>Bacterial genome adaptation to niches: divergence of the potential virulence genes in three Burkholderia species of different survival strategies.</title>
        <authorList>
            <person name="Kim H.S."/>
            <person name="Schell M.A."/>
            <person name="Yu Y."/>
            <person name="Ulrich R.L."/>
            <person name="Sarria S.H."/>
            <person name="Nierman W.C."/>
            <person name="DeShazer D."/>
        </authorList>
    </citation>
    <scope>NUCLEOTIDE SEQUENCE [LARGE SCALE GENOMIC DNA]</scope>
    <source>
        <strain>ATCC 700388 / DSM 13276 / CCUG 48851 / CIP 106301 / E264</strain>
    </source>
</reference>
<comment type="function">
    <text evidence="1">Catalyzes the desulfonation of aliphatic sulfonates.</text>
</comment>
<comment type="catalytic activity">
    <reaction evidence="1">
        <text>an alkanesulfonate + FMNH2 + O2 = an aldehyde + FMN + sulfite + H2O + 2 H(+)</text>
        <dbReference type="Rhea" id="RHEA:23064"/>
        <dbReference type="ChEBI" id="CHEBI:15377"/>
        <dbReference type="ChEBI" id="CHEBI:15378"/>
        <dbReference type="ChEBI" id="CHEBI:15379"/>
        <dbReference type="ChEBI" id="CHEBI:17359"/>
        <dbReference type="ChEBI" id="CHEBI:17478"/>
        <dbReference type="ChEBI" id="CHEBI:57618"/>
        <dbReference type="ChEBI" id="CHEBI:58210"/>
        <dbReference type="ChEBI" id="CHEBI:134249"/>
        <dbReference type="EC" id="1.14.14.5"/>
    </reaction>
</comment>
<comment type="similarity">
    <text evidence="1">Belongs to the SsuD family.</text>
</comment>
<comment type="sequence caution" evidence="2">
    <conflict type="erroneous initiation">
        <sequence resource="EMBL-CDS" id="ABC38862"/>
    </conflict>
    <text>Extended N-terminus.</text>
</comment>
<name>SSUD_BURTA</name>
<proteinExistence type="inferred from homology"/>
<sequence length="384" mass="41856">MNVFWFIPTHGDSRYLGTAEGARAADYDYFRQVAVAADTLGYDGVLLPTGRSCEDAWVVASSLIPATKRLKFLVAIRPGLSSPGLSARMASTFDRLSGGRLLINVVTGGDSAELEGDGLFADHDTRYALTDDFLHIWRKLLAESHENGSVDFDGEHLRAKGGKLLYPPIQHPHPPLWFGGSSPAAHAIAADHIETYLTWGEPPAAVAKKIADIRARAAERGREIRFGIRLHVIVRETEEEAWRDADRLISRLDDDTIARAQQAFAKMDSEGQRRMAALHGGKRGSRQELEIYPNLWAGVGLVRGGAGTALVGNPEQVAARMREYAALGIETFILSGYPHLEESYRFAELVFPLVKGGDARRAGPLSGPFGEVVGNGYLPKVSQS</sequence>
<evidence type="ECO:0000255" key="1">
    <source>
        <dbReference type="HAMAP-Rule" id="MF_01229"/>
    </source>
</evidence>
<evidence type="ECO:0000305" key="2"/>
<keyword id="KW-0285">Flavoprotein</keyword>
<keyword id="KW-0288">FMN</keyword>
<keyword id="KW-0503">Monooxygenase</keyword>
<keyword id="KW-0560">Oxidoreductase</keyword>